<dbReference type="EC" id="3.5.3.12" evidence="1"/>
<dbReference type="EMBL" id="CP000921">
    <property type="protein sequence ID" value="ACO24000.1"/>
    <property type="molecule type" value="Genomic_DNA"/>
</dbReference>
<dbReference type="RefSeq" id="WP_000969458.1">
    <property type="nucleotide sequence ID" value="NC_012469.1"/>
</dbReference>
<dbReference type="SMR" id="C1CRX2"/>
<dbReference type="KEGG" id="snt:SPT_1278"/>
<dbReference type="HOGENOM" id="CLU_037682_1_0_9"/>
<dbReference type="GO" id="GO:0047632">
    <property type="term" value="F:agmatine deiminase activity"/>
    <property type="evidence" value="ECO:0007669"/>
    <property type="project" value="UniProtKB-UniRule"/>
</dbReference>
<dbReference type="GO" id="GO:0004668">
    <property type="term" value="F:protein-arginine deiminase activity"/>
    <property type="evidence" value="ECO:0007669"/>
    <property type="project" value="InterPro"/>
</dbReference>
<dbReference type="GO" id="GO:0009446">
    <property type="term" value="P:putrescine biosynthetic process"/>
    <property type="evidence" value="ECO:0007669"/>
    <property type="project" value="InterPro"/>
</dbReference>
<dbReference type="Gene3D" id="3.75.10.10">
    <property type="entry name" value="L-arginine/glycine Amidinotransferase, Chain A"/>
    <property type="match status" value="1"/>
</dbReference>
<dbReference type="HAMAP" id="MF_01841">
    <property type="entry name" value="Agmatine_deimin"/>
    <property type="match status" value="1"/>
</dbReference>
<dbReference type="InterPro" id="IPR017754">
    <property type="entry name" value="Agmatine_deiminase"/>
</dbReference>
<dbReference type="InterPro" id="IPR007466">
    <property type="entry name" value="Peptidyl-Arg-deiminase_porph"/>
</dbReference>
<dbReference type="NCBIfam" id="TIGR03380">
    <property type="entry name" value="agmatine_aguA"/>
    <property type="match status" value="1"/>
</dbReference>
<dbReference type="NCBIfam" id="NF010070">
    <property type="entry name" value="PRK13551.1"/>
    <property type="match status" value="1"/>
</dbReference>
<dbReference type="PANTHER" id="PTHR31377">
    <property type="entry name" value="AGMATINE DEIMINASE-RELATED"/>
    <property type="match status" value="1"/>
</dbReference>
<dbReference type="PANTHER" id="PTHR31377:SF0">
    <property type="entry name" value="AGMATINE DEIMINASE-RELATED"/>
    <property type="match status" value="1"/>
</dbReference>
<dbReference type="Pfam" id="PF04371">
    <property type="entry name" value="PAD_porph"/>
    <property type="match status" value="1"/>
</dbReference>
<dbReference type="SUPFAM" id="SSF55909">
    <property type="entry name" value="Pentein"/>
    <property type="match status" value="1"/>
</dbReference>
<gene>
    <name evidence="1" type="primary">aguA</name>
    <name type="ordered locus">SPT_1278</name>
</gene>
<sequence>MMDSPKKLGYHMPAEYEPHHGTLMIWPTRPGSWPFQGKAAKRAFTQIIETIAEGERVYLLVEQAYLYEAQSYLGDKVVYLDIPTNDAWARDTGPTILVNDKGKKLAVDWAFNAWGGTYDGLYQDYEEDDQVASRFAEVLEKPVYDAKPFVLEGGAIHSDGQGTILVTESCLLSPGRNPNLTKEEIENTLLESLGAEKVIWLPYGIYQDETNEHVDNVAAFVGSAELVLAWTDDENDPQYAMSKADLELLEQETDAKGCHFTIHKLPIPAVRQVVTEEDLPGYIYEEGEEERYAGERLAASYVNFYIANKAVLVPQFEDVNDQVAIDILSKCFPDRKVVGIPARDILLGGGNIHCITQQIPE</sequence>
<feature type="chain" id="PRO_1000188421" description="Putative agmatine deiminase">
    <location>
        <begin position="1"/>
        <end position="361"/>
    </location>
</feature>
<feature type="active site" description="Amidino-cysteine intermediate" evidence="1">
    <location>
        <position position="354"/>
    </location>
</feature>
<keyword id="KW-0378">Hydrolase</keyword>
<organism>
    <name type="scientific">Streptococcus pneumoniae (strain Taiwan19F-14)</name>
    <dbReference type="NCBI Taxonomy" id="487213"/>
    <lineage>
        <taxon>Bacteria</taxon>
        <taxon>Bacillati</taxon>
        <taxon>Bacillota</taxon>
        <taxon>Bacilli</taxon>
        <taxon>Lactobacillales</taxon>
        <taxon>Streptococcaceae</taxon>
        <taxon>Streptococcus</taxon>
    </lineage>
</organism>
<name>AGUA_STRZT</name>
<accession>C1CRX2</accession>
<proteinExistence type="inferred from homology"/>
<evidence type="ECO:0000255" key="1">
    <source>
        <dbReference type="HAMAP-Rule" id="MF_01841"/>
    </source>
</evidence>
<comment type="catalytic activity">
    <reaction evidence="1">
        <text>agmatine + H2O = N-carbamoylputrescine + NH4(+)</text>
        <dbReference type="Rhea" id="RHEA:18037"/>
        <dbReference type="ChEBI" id="CHEBI:15377"/>
        <dbReference type="ChEBI" id="CHEBI:28938"/>
        <dbReference type="ChEBI" id="CHEBI:58145"/>
        <dbReference type="ChEBI" id="CHEBI:58318"/>
        <dbReference type="EC" id="3.5.3.12"/>
    </reaction>
</comment>
<comment type="similarity">
    <text evidence="1">Belongs to the agmatine deiminase family.</text>
</comment>
<reference key="1">
    <citation type="journal article" date="2010" name="Genome Biol.">
        <title>Structure and dynamics of the pan-genome of Streptococcus pneumoniae and closely related species.</title>
        <authorList>
            <person name="Donati C."/>
            <person name="Hiller N.L."/>
            <person name="Tettelin H."/>
            <person name="Muzzi A."/>
            <person name="Croucher N.J."/>
            <person name="Angiuoli S.V."/>
            <person name="Oggioni M."/>
            <person name="Dunning Hotopp J.C."/>
            <person name="Hu F.Z."/>
            <person name="Riley D.R."/>
            <person name="Covacci A."/>
            <person name="Mitchell T.J."/>
            <person name="Bentley S.D."/>
            <person name="Kilian M."/>
            <person name="Ehrlich G.D."/>
            <person name="Rappuoli R."/>
            <person name="Moxon E.R."/>
            <person name="Masignani V."/>
        </authorList>
    </citation>
    <scope>NUCLEOTIDE SEQUENCE [LARGE SCALE GENOMIC DNA]</scope>
    <source>
        <strain>Taiwan19F-14</strain>
    </source>
</reference>
<protein>
    <recommendedName>
        <fullName evidence="1">Putative agmatine deiminase</fullName>
        <ecNumber evidence="1">3.5.3.12</ecNumber>
    </recommendedName>
    <alternativeName>
        <fullName evidence="1">Agmatine iminohydrolase</fullName>
    </alternativeName>
</protein>